<comment type="function">
    <text evidence="1">May be involved in recombination.</text>
</comment>
<comment type="subcellular location">
    <subcellularLocation>
        <location evidence="1">Cytoplasm</location>
        <location evidence="1">Nucleoid</location>
    </subcellularLocation>
</comment>
<comment type="similarity">
    <text evidence="1">Belongs to the RdgC family.</text>
</comment>
<feature type="chain" id="PRO_1000021244" description="Recombination-associated protein RdgC">
    <location>
        <begin position="1"/>
        <end position="302"/>
    </location>
</feature>
<gene>
    <name evidence="1" type="primary">rdgC</name>
    <name type="ordered locus">XC_4189</name>
</gene>
<dbReference type="EMBL" id="CP000050">
    <property type="protein sequence ID" value="AAY51227.1"/>
    <property type="molecule type" value="Genomic_DNA"/>
</dbReference>
<dbReference type="RefSeq" id="WP_011039167.1">
    <property type="nucleotide sequence ID" value="NZ_CP155948.1"/>
</dbReference>
<dbReference type="SMR" id="Q4UNZ6"/>
<dbReference type="KEGG" id="xcb:XC_4189"/>
<dbReference type="HOGENOM" id="CLU_052038_1_1_6"/>
<dbReference type="Proteomes" id="UP000000420">
    <property type="component" value="Chromosome"/>
</dbReference>
<dbReference type="GO" id="GO:0043590">
    <property type="term" value="C:bacterial nucleoid"/>
    <property type="evidence" value="ECO:0007669"/>
    <property type="project" value="TreeGrafter"/>
</dbReference>
<dbReference type="GO" id="GO:0005737">
    <property type="term" value="C:cytoplasm"/>
    <property type="evidence" value="ECO:0007669"/>
    <property type="project" value="UniProtKB-UniRule"/>
</dbReference>
<dbReference type="GO" id="GO:0003690">
    <property type="term" value="F:double-stranded DNA binding"/>
    <property type="evidence" value="ECO:0007669"/>
    <property type="project" value="TreeGrafter"/>
</dbReference>
<dbReference type="GO" id="GO:0006310">
    <property type="term" value="P:DNA recombination"/>
    <property type="evidence" value="ECO:0007669"/>
    <property type="project" value="UniProtKB-UniRule"/>
</dbReference>
<dbReference type="GO" id="GO:0000018">
    <property type="term" value="P:regulation of DNA recombination"/>
    <property type="evidence" value="ECO:0007669"/>
    <property type="project" value="TreeGrafter"/>
</dbReference>
<dbReference type="HAMAP" id="MF_00194">
    <property type="entry name" value="RdgC"/>
    <property type="match status" value="1"/>
</dbReference>
<dbReference type="InterPro" id="IPR007476">
    <property type="entry name" value="RdgC"/>
</dbReference>
<dbReference type="NCBIfam" id="NF001464">
    <property type="entry name" value="PRK00321.1-5"/>
    <property type="match status" value="1"/>
</dbReference>
<dbReference type="NCBIfam" id="NF001465">
    <property type="entry name" value="PRK00321.1-6"/>
    <property type="match status" value="1"/>
</dbReference>
<dbReference type="PANTHER" id="PTHR38103">
    <property type="entry name" value="RECOMBINATION-ASSOCIATED PROTEIN RDGC"/>
    <property type="match status" value="1"/>
</dbReference>
<dbReference type="PANTHER" id="PTHR38103:SF1">
    <property type="entry name" value="RECOMBINATION-ASSOCIATED PROTEIN RDGC"/>
    <property type="match status" value="1"/>
</dbReference>
<dbReference type="Pfam" id="PF04381">
    <property type="entry name" value="RdgC"/>
    <property type="match status" value="1"/>
</dbReference>
<proteinExistence type="inferred from homology"/>
<evidence type="ECO:0000255" key="1">
    <source>
        <dbReference type="HAMAP-Rule" id="MF_00194"/>
    </source>
</evidence>
<protein>
    <recommendedName>
        <fullName evidence="1">Recombination-associated protein RdgC</fullName>
    </recommendedName>
</protein>
<accession>Q4UNZ6</accession>
<reference key="1">
    <citation type="journal article" date="2005" name="Genome Res.">
        <title>Comparative and functional genomic analyses of the pathogenicity of phytopathogen Xanthomonas campestris pv. campestris.</title>
        <authorList>
            <person name="Qian W."/>
            <person name="Jia Y."/>
            <person name="Ren S.-X."/>
            <person name="He Y.-Q."/>
            <person name="Feng J.-X."/>
            <person name="Lu L.-F."/>
            <person name="Sun Q."/>
            <person name="Ying G."/>
            <person name="Tang D.-J."/>
            <person name="Tang H."/>
            <person name="Wu W."/>
            <person name="Hao P."/>
            <person name="Wang L."/>
            <person name="Jiang B.-L."/>
            <person name="Zeng S."/>
            <person name="Gu W.-Y."/>
            <person name="Lu G."/>
            <person name="Rong L."/>
            <person name="Tian Y."/>
            <person name="Yao Z."/>
            <person name="Fu G."/>
            <person name="Chen B."/>
            <person name="Fang R."/>
            <person name="Qiang B."/>
            <person name="Chen Z."/>
            <person name="Zhao G.-P."/>
            <person name="Tang J.-L."/>
            <person name="He C."/>
        </authorList>
    </citation>
    <scope>NUCLEOTIDE SEQUENCE [LARGE SCALE GENOMIC DNA]</scope>
    <source>
        <strain>8004</strain>
    </source>
</reference>
<keyword id="KW-0963">Cytoplasm</keyword>
<keyword id="KW-0233">DNA recombination</keyword>
<sequence length="302" mass="33475">MFFRNLTLFRFPTTLDFSEIETLLPQVQLKPVGPLEMSSRGFISPFGRDEQDVLSHRLEDFLWLTVGGEDKILPGAVVNDLLERKVAEIEEKEGRRPGGKARKRLKDDLIHELLPRAFVKSSRTDAILDLQHGYIAVNTSSRKSGENVMSEIRGALGSFPALPLNAEVAPRAILTGWIAGEPLPEGLSLGEECEMKDPIEGGAVVKCQHQELRGDEIDKHLEAGKQVTKLALVMDDNLSFVLGDDLVIRKLKFLDGALDQLEHSEGDGARAELDARFALMSAEVRRLFLLLEDALKLSKAEA</sequence>
<name>RDGC_XANC8</name>
<organism>
    <name type="scientific">Xanthomonas campestris pv. campestris (strain 8004)</name>
    <dbReference type="NCBI Taxonomy" id="314565"/>
    <lineage>
        <taxon>Bacteria</taxon>
        <taxon>Pseudomonadati</taxon>
        <taxon>Pseudomonadota</taxon>
        <taxon>Gammaproteobacteria</taxon>
        <taxon>Lysobacterales</taxon>
        <taxon>Lysobacteraceae</taxon>
        <taxon>Xanthomonas</taxon>
    </lineage>
</organism>